<sequence>MALGPGCRAVRGCRPVLKRAFSLHKAHSVKDMESILQLVRSVVPALTTKKHKGQDGRIGVVGGCREYTGAPYFAAISALKVGADLSHVFCTQEAAPVIKAYSPELIVHPVLDSPEAVRDVEQWLPRLHALVVGPGLGRDDALLENVKGILEASKARGIPVVIDADGLWLIAQQPALIQGYRKAVLTPNHVEFGRLSEAVLGVPLDGGDRHGAVLRLSQALGNVTVVQKGEQDVISDGEQVLECSQEGSGRRCGGQGDLLSGSLGVLAHWALRAGPQKTGGPSPLLVAAFGACALTRQCSQQAFQKYGRATTTSDMVAEVGPAFRRLFEA</sequence>
<accession>E1BNQ4</accession>
<evidence type="ECO:0000250" key="1">
    <source>
        <dbReference type="UniProtKB" id="Q8IW45"/>
    </source>
</evidence>
<evidence type="ECO:0000250" key="2">
    <source>
        <dbReference type="UniProtKB" id="Q9CZ42"/>
    </source>
</evidence>
<evidence type="ECO:0000255" key="3">
    <source>
        <dbReference type="HAMAP-Rule" id="MF_03157"/>
    </source>
</evidence>
<keyword id="KW-0007">Acetylation</keyword>
<keyword id="KW-0067">ATP-binding</keyword>
<keyword id="KW-0456">Lyase</keyword>
<keyword id="KW-0496">Mitochondrion</keyword>
<keyword id="KW-0520">NAD</keyword>
<keyword id="KW-0521">NADP</keyword>
<keyword id="KW-0547">Nucleotide-binding</keyword>
<keyword id="KW-0597">Phosphoprotein</keyword>
<keyword id="KW-1185">Reference proteome</keyword>
<keyword id="KW-0809">Transit peptide</keyword>
<reference key="1">
    <citation type="journal article" date="2009" name="Genome Biol.">
        <title>A whole-genome assembly of the domestic cow, Bos taurus.</title>
        <authorList>
            <person name="Zimin A.V."/>
            <person name="Delcher A.L."/>
            <person name="Florea L."/>
            <person name="Kelley D.R."/>
            <person name="Schatz M.C."/>
            <person name="Puiu D."/>
            <person name="Hanrahan F."/>
            <person name="Pertea G."/>
            <person name="Van Tassell C.P."/>
            <person name="Sonstegard T.S."/>
            <person name="Marcais G."/>
            <person name="Roberts M."/>
            <person name="Subramanian P."/>
            <person name="Yorke J.A."/>
            <person name="Salzberg S.L."/>
        </authorList>
    </citation>
    <scope>NUCLEOTIDE SEQUENCE [LARGE SCALE GENOMIC DNA]</scope>
    <source>
        <strain>Hereford</strain>
    </source>
</reference>
<organism>
    <name type="scientific">Bos taurus</name>
    <name type="common">Bovine</name>
    <dbReference type="NCBI Taxonomy" id="9913"/>
    <lineage>
        <taxon>Eukaryota</taxon>
        <taxon>Metazoa</taxon>
        <taxon>Chordata</taxon>
        <taxon>Craniata</taxon>
        <taxon>Vertebrata</taxon>
        <taxon>Euteleostomi</taxon>
        <taxon>Mammalia</taxon>
        <taxon>Eutheria</taxon>
        <taxon>Laurasiatheria</taxon>
        <taxon>Artiodactyla</taxon>
        <taxon>Ruminantia</taxon>
        <taxon>Pecora</taxon>
        <taxon>Bovidae</taxon>
        <taxon>Bovinae</taxon>
        <taxon>Bos</taxon>
    </lineage>
</organism>
<name>NNRD_BOVIN</name>
<gene>
    <name evidence="1" type="primary">NAXD</name>
    <name evidence="3" type="synonym">CARKD</name>
</gene>
<feature type="transit peptide" description="Mitochondrion" evidence="3">
    <location>
        <begin position="1"/>
        <end position="28"/>
    </location>
</feature>
<feature type="chain" id="PRO_0000416156" description="ATP-dependent (S)-NAD(P)H-hydrate dehydratase">
    <location>
        <begin position="29"/>
        <end position="329"/>
    </location>
</feature>
<feature type="domain" description="YjeF C-terminal" evidence="3">
    <location>
        <begin position="35"/>
        <end position="326"/>
    </location>
</feature>
<feature type="binding site" evidence="3">
    <location>
        <position position="135"/>
    </location>
    <ligand>
        <name>(6S)-NADPHX</name>
        <dbReference type="ChEBI" id="CHEBI:64076"/>
    </ligand>
</feature>
<feature type="binding site" evidence="3">
    <location>
        <begin position="188"/>
        <end position="194"/>
    </location>
    <ligand>
        <name>(6S)-NADPHX</name>
        <dbReference type="ChEBI" id="CHEBI:64076"/>
    </ligand>
</feature>
<feature type="binding site" evidence="3">
    <location>
        <begin position="228"/>
        <end position="232"/>
    </location>
    <ligand>
        <name>ATP</name>
        <dbReference type="ChEBI" id="CHEBI:30616"/>
    </ligand>
</feature>
<feature type="binding site" evidence="3">
    <location>
        <begin position="247"/>
        <end position="256"/>
    </location>
    <ligand>
        <name>ATP</name>
        <dbReference type="ChEBI" id="CHEBI:30616"/>
    </ligand>
</feature>
<feature type="binding site" evidence="3">
    <location>
        <position position="257"/>
    </location>
    <ligand>
        <name>(6S)-NADPHX</name>
        <dbReference type="ChEBI" id="CHEBI:64076"/>
    </ligand>
</feature>
<feature type="modified residue" description="N6-acetyllysine" evidence="2">
    <location>
        <position position="49"/>
    </location>
</feature>
<feature type="modified residue" description="Phosphotyrosine" evidence="2">
    <location>
        <position position="67"/>
    </location>
</feature>
<dbReference type="EC" id="4.2.1.93" evidence="2 3"/>
<dbReference type="EMBL" id="DAAA02034911">
    <property type="status" value="NOT_ANNOTATED_CDS"/>
    <property type="molecule type" value="Genomic_DNA"/>
</dbReference>
<dbReference type="EMBL" id="DAAA02034912">
    <property type="status" value="NOT_ANNOTATED_CDS"/>
    <property type="molecule type" value="Genomic_DNA"/>
</dbReference>
<dbReference type="RefSeq" id="XP_002692037.1">
    <property type="nucleotide sequence ID" value="XM_002691991.5"/>
</dbReference>
<dbReference type="SMR" id="E1BNQ4"/>
<dbReference type="FunCoup" id="E1BNQ4">
    <property type="interactions" value="2799"/>
</dbReference>
<dbReference type="STRING" id="9913.ENSBTAP00000015238"/>
<dbReference type="PaxDb" id="9913-ENSBTAP00000015238"/>
<dbReference type="GeneID" id="613996"/>
<dbReference type="KEGG" id="bta:613996"/>
<dbReference type="CTD" id="55739"/>
<dbReference type="VEuPathDB" id="HostDB:ENSBTAG00000011466"/>
<dbReference type="eggNOG" id="KOG3974">
    <property type="taxonomic scope" value="Eukaryota"/>
</dbReference>
<dbReference type="HOGENOM" id="CLU_030651_3_0_1"/>
<dbReference type="InParanoid" id="E1BNQ4"/>
<dbReference type="OMA" id="WRAAYHN"/>
<dbReference type="OrthoDB" id="8110916at2759"/>
<dbReference type="TreeFam" id="TF300116"/>
<dbReference type="Reactome" id="R-BTA-197264">
    <property type="pathway name" value="Nicotinamide salvaging"/>
</dbReference>
<dbReference type="Proteomes" id="UP000009136">
    <property type="component" value="Chromosome 12"/>
</dbReference>
<dbReference type="Bgee" id="ENSBTAG00000011466">
    <property type="expression patterns" value="Expressed in saliva-secreting gland and 104 other cell types or tissues"/>
</dbReference>
<dbReference type="GO" id="GO:0005739">
    <property type="term" value="C:mitochondrion"/>
    <property type="evidence" value="ECO:0007669"/>
    <property type="project" value="UniProtKB-SubCell"/>
</dbReference>
<dbReference type="GO" id="GO:0005524">
    <property type="term" value="F:ATP binding"/>
    <property type="evidence" value="ECO:0007669"/>
    <property type="project" value="UniProtKB-KW"/>
</dbReference>
<dbReference type="GO" id="GO:0047453">
    <property type="term" value="F:ATP-dependent NAD(P)H-hydrate dehydratase activity"/>
    <property type="evidence" value="ECO:0000318"/>
    <property type="project" value="GO_Central"/>
</dbReference>
<dbReference type="GO" id="GO:0110051">
    <property type="term" value="P:metabolite repair"/>
    <property type="evidence" value="ECO:0000318"/>
    <property type="project" value="GO_Central"/>
</dbReference>
<dbReference type="GO" id="GO:0046496">
    <property type="term" value="P:nicotinamide nucleotide metabolic process"/>
    <property type="evidence" value="ECO:0007669"/>
    <property type="project" value="UniProtKB-UniRule"/>
</dbReference>
<dbReference type="CDD" id="cd01171">
    <property type="entry name" value="YXKO-related"/>
    <property type="match status" value="1"/>
</dbReference>
<dbReference type="FunFam" id="3.40.1190.20:FF:000013">
    <property type="entry name" value="ATP-dependent (S)-NAD(P)H-hydrate dehydratase"/>
    <property type="match status" value="1"/>
</dbReference>
<dbReference type="Gene3D" id="3.40.1190.20">
    <property type="match status" value="1"/>
</dbReference>
<dbReference type="HAMAP" id="MF_01965">
    <property type="entry name" value="NADHX_dehydratase"/>
    <property type="match status" value="1"/>
</dbReference>
<dbReference type="InterPro" id="IPR000631">
    <property type="entry name" value="CARKD"/>
</dbReference>
<dbReference type="InterPro" id="IPR029056">
    <property type="entry name" value="Ribokinase-like"/>
</dbReference>
<dbReference type="NCBIfam" id="TIGR00196">
    <property type="entry name" value="yjeF_cterm"/>
    <property type="match status" value="1"/>
</dbReference>
<dbReference type="PANTHER" id="PTHR12592:SF0">
    <property type="entry name" value="ATP-DEPENDENT (S)-NAD(P)H-HYDRATE DEHYDRATASE"/>
    <property type="match status" value="1"/>
</dbReference>
<dbReference type="PANTHER" id="PTHR12592">
    <property type="entry name" value="ATP-DEPENDENT (S)-NAD(P)H-HYDRATE DEHYDRATASE FAMILY MEMBER"/>
    <property type="match status" value="1"/>
</dbReference>
<dbReference type="Pfam" id="PF01256">
    <property type="entry name" value="Carb_kinase"/>
    <property type="match status" value="1"/>
</dbReference>
<dbReference type="SUPFAM" id="SSF53613">
    <property type="entry name" value="Ribokinase-like"/>
    <property type="match status" value="1"/>
</dbReference>
<dbReference type="PROSITE" id="PS51383">
    <property type="entry name" value="YJEF_C_3"/>
    <property type="match status" value="1"/>
</dbReference>
<proteinExistence type="inferred from homology"/>
<protein>
    <recommendedName>
        <fullName evidence="3">ATP-dependent (S)-NAD(P)H-hydrate dehydratase</fullName>
        <ecNumber evidence="2 3">4.2.1.93</ecNumber>
    </recommendedName>
    <alternativeName>
        <fullName evidence="3">ATP-dependent NAD(P)HX dehydratase</fullName>
    </alternativeName>
    <alternativeName>
        <fullName evidence="3">Carbohydrate kinase domain-containing protein</fullName>
    </alternativeName>
    <alternativeName>
        <fullName evidence="1">NAD(P)HX dehydratase</fullName>
    </alternativeName>
</protein>
<comment type="function">
    <text evidence="3">Catalyzes the dehydration of the S-form of NAD(P)HX at the expense of ATP, which is converted to ADP. Together with NAD(P)HX epimerase, which catalyzes the epimerization of the S- and R-forms, the enzyme allows the repair of both epimers of NAD(P)HX, a damaged form of NAD(P)H that is a result of enzymatic or heat-dependent hydration.</text>
</comment>
<comment type="catalytic activity">
    <reaction evidence="2 3">
        <text>(6S)-NADHX + ATP = ADP + phosphate + NADH + H(+)</text>
        <dbReference type="Rhea" id="RHEA:19017"/>
        <dbReference type="ChEBI" id="CHEBI:15378"/>
        <dbReference type="ChEBI" id="CHEBI:30616"/>
        <dbReference type="ChEBI" id="CHEBI:43474"/>
        <dbReference type="ChEBI" id="CHEBI:57945"/>
        <dbReference type="ChEBI" id="CHEBI:64074"/>
        <dbReference type="ChEBI" id="CHEBI:456216"/>
        <dbReference type="EC" id="4.2.1.93"/>
    </reaction>
</comment>
<comment type="catalytic activity">
    <reaction evidence="2">
        <text>(6S)-NADPHX + ATP = ADP + phosphate + NADPH + H(+)</text>
        <dbReference type="Rhea" id="RHEA:32231"/>
        <dbReference type="ChEBI" id="CHEBI:15378"/>
        <dbReference type="ChEBI" id="CHEBI:30616"/>
        <dbReference type="ChEBI" id="CHEBI:43474"/>
        <dbReference type="ChEBI" id="CHEBI:57783"/>
        <dbReference type="ChEBI" id="CHEBI:64076"/>
        <dbReference type="ChEBI" id="CHEBI:456216"/>
        <dbReference type="EC" id="4.2.1.93"/>
    </reaction>
</comment>
<comment type="cofactor">
    <cofactor evidence="3">
        <name>Mg(2+)</name>
        <dbReference type="ChEBI" id="CHEBI:18420"/>
    </cofactor>
</comment>
<comment type="subcellular location">
    <subcellularLocation>
        <location evidence="3">Mitochondrion</location>
    </subcellularLocation>
</comment>
<comment type="similarity">
    <text evidence="3">Belongs to the NnrD/CARKD family.</text>
</comment>